<evidence type="ECO:0000255" key="1">
    <source>
        <dbReference type="HAMAP-Rule" id="MF_00073"/>
    </source>
</evidence>
<proteinExistence type="inferred from homology"/>
<organism>
    <name type="scientific">Haemophilus influenzae (strain PittEE)</name>
    <dbReference type="NCBI Taxonomy" id="374930"/>
    <lineage>
        <taxon>Bacteria</taxon>
        <taxon>Pseudomonadati</taxon>
        <taxon>Pseudomonadota</taxon>
        <taxon>Gammaproteobacteria</taxon>
        <taxon>Pasteurellales</taxon>
        <taxon>Pasteurellaceae</taxon>
        <taxon>Haemophilus</taxon>
    </lineage>
</organism>
<keyword id="KW-0694">RNA-binding</keyword>
<keyword id="KW-0804">Transcription</keyword>
<keyword id="KW-0889">Transcription antitermination</keyword>
<keyword id="KW-0805">Transcription regulation</keyword>
<gene>
    <name evidence="1" type="primary">nusB</name>
    <name type="ordered locus">CGSHiEE_05155</name>
</gene>
<reference key="1">
    <citation type="journal article" date="2007" name="Genome Biol.">
        <title>Characterization and modeling of the Haemophilus influenzae core and supragenomes based on the complete genomic sequences of Rd and 12 clinical nontypeable strains.</title>
        <authorList>
            <person name="Hogg J.S."/>
            <person name="Hu F.Z."/>
            <person name="Janto B."/>
            <person name="Boissy R."/>
            <person name="Hayes J."/>
            <person name="Keefe R."/>
            <person name="Post J.C."/>
            <person name="Ehrlich G.D."/>
        </authorList>
    </citation>
    <scope>NUCLEOTIDE SEQUENCE [LARGE SCALE GENOMIC DNA]</scope>
    <source>
        <strain>PittEE</strain>
    </source>
</reference>
<feature type="chain" id="PRO_1000023736" description="Transcription antitermination protein NusB">
    <location>
        <begin position="1"/>
        <end position="144"/>
    </location>
</feature>
<accession>A5UCB7</accession>
<protein>
    <recommendedName>
        <fullName evidence="1">Transcription antitermination protein NusB</fullName>
    </recommendedName>
    <alternativeName>
        <fullName evidence="1">Antitermination factor NusB</fullName>
    </alternativeName>
</protein>
<name>NUSB_HAEIE</name>
<dbReference type="EMBL" id="CP000671">
    <property type="protein sequence ID" value="ABQ98418.1"/>
    <property type="molecule type" value="Genomic_DNA"/>
</dbReference>
<dbReference type="SMR" id="A5UCB7"/>
<dbReference type="KEGG" id="hip:CGSHiEE_05155"/>
<dbReference type="HOGENOM" id="CLU_087843_4_1_6"/>
<dbReference type="GO" id="GO:0005829">
    <property type="term" value="C:cytosol"/>
    <property type="evidence" value="ECO:0007669"/>
    <property type="project" value="TreeGrafter"/>
</dbReference>
<dbReference type="GO" id="GO:0003723">
    <property type="term" value="F:RNA binding"/>
    <property type="evidence" value="ECO:0007669"/>
    <property type="project" value="UniProtKB-UniRule"/>
</dbReference>
<dbReference type="GO" id="GO:0006353">
    <property type="term" value="P:DNA-templated transcription termination"/>
    <property type="evidence" value="ECO:0007669"/>
    <property type="project" value="UniProtKB-UniRule"/>
</dbReference>
<dbReference type="GO" id="GO:0031564">
    <property type="term" value="P:transcription antitermination"/>
    <property type="evidence" value="ECO:0007669"/>
    <property type="project" value="UniProtKB-KW"/>
</dbReference>
<dbReference type="CDD" id="cd00619">
    <property type="entry name" value="Terminator_NusB"/>
    <property type="match status" value="1"/>
</dbReference>
<dbReference type="FunFam" id="1.10.940.10:FF:000001">
    <property type="entry name" value="Transcription antitermination factor NusB"/>
    <property type="match status" value="1"/>
</dbReference>
<dbReference type="Gene3D" id="1.10.940.10">
    <property type="entry name" value="NusB-like"/>
    <property type="match status" value="1"/>
</dbReference>
<dbReference type="HAMAP" id="MF_00073">
    <property type="entry name" value="NusB"/>
    <property type="match status" value="1"/>
</dbReference>
<dbReference type="InterPro" id="IPR035926">
    <property type="entry name" value="NusB-like_sf"/>
</dbReference>
<dbReference type="InterPro" id="IPR011605">
    <property type="entry name" value="NusB_fam"/>
</dbReference>
<dbReference type="InterPro" id="IPR006027">
    <property type="entry name" value="NusB_RsmB_TIM44"/>
</dbReference>
<dbReference type="NCBIfam" id="TIGR01951">
    <property type="entry name" value="nusB"/>
    <property type="match status" value="1"/>
</dbReference>
<dbReference type="PANTHER" id="PTHR11078:SF3">
    <property type="entry name" value="ANTITERMINATION NUSB DOMAIN-CONTAINING PROTEIN"/>
    <property type="match status" value="1"/>
</dbReference>
<dbReference type="PANTHER" id="PTHR11078">
    <property type="entry name" value="N UTILIZATION SUBSTANCE PROTEIN B-RELATED"/>
    <property type="match status" value="1"/>
</dbReference>
<dbReference type="Pfam" id="PF01029">
    <property type="entry name" value="NusB"/>
    <property type="match status" value="1"/>
</dbReference>
<dbReference type="SUPFAM" id="SSF48013">
    <property type="entry name" value="NusB-like"/>
    <property type="match status" value="1"/>
</dbReference>
<comment type="function">
    <text evidence="1">Involved in transcription antitermination. Required for transcription of ribosomal RNA (rRNA) genes. Binds specifically to the boxA antiterminator sequence of the ribosomal RNA (rrn) operons.</text>
</comment>
<comment type="similarity">
    <text evidence="1">Belongs to the NusB family.</text>
</comment>
<sequence length="144" mass="16516">MTEQKQVKKPSARRRARECTVQALYSWAVSGNTAEQVELAFVLDQDMDGVDKPYFRKLFRQTIENIETVDFSISPYIDRTFDELDPIETAILRLAVYELRFELDVPYKVVINEAIEVAKVFGADESHKYINGVLDKIAPALGRK</sequence>